<comment type="catalytic activity">
    <reaction evidence="5">
        <text>S-ubiquitinyl-[E2 ubiquitin-conjugating enzyme]-L-cysteine + [acceptor protein]-L-lysine = [E2 ubiquitin-conjugating enzyme]-L-cysteine + N(6)-ubiquitinyl-[acceptor protein]-L-lysine.</text>
        <dbReference type="EC" id="2.3.2.27"/>
    </reaction>
</comment>
<comment type="pathway">
    <text>Protein modification; protein ubiquitination.</text>
</comment>
<comment type="subcellular location">
    <subcellularLocation>
        <location evidence="5">Membrane</location>
        <topology evidence="5">Single-pass membrane protein</topology>
    </subcellularLocation>
</comment>
<comment type="domain">
    <text evidence="1">The RING-type zinc finger domain mediates binding to an E2 ubiquitin-conjugating enzyme.</text>
</comment>
<comment type="similarity">
    <text evidence="5">Belongs to the RING-type zinc finger family. ATL subfamily.</text>
</comment>
<dbReference type="EC" id="2.3.2.27" evidence="5"/>
<dbReference type="EMBL" id="AP000735">
    <property type="protein sequence ID" value="BAB01689.1"/>
    <property type="molecule type" value="Genomic_DNA"/>
</dbReference>
<dbReference type="EMBL" id="CP002686">
    <property type="protein sequence ID" value="AEE76169.1"/>
    <property type="molecule type" value="Genomic_DNA"/>
</dbReference>
<dbReference type="EMBL" id="CP002686">
    <property type="protein sequence ID" value="AEE76170.1"/>
    <property type="molecule type" value="Genomic_DNA"/>
</dbReference>
<dbReference type="EMBL" id="CP002686">
    <property type="protein sequence ID" value="ANM65228.1"/>
    <property type="molecule type" value="Genomic_DNA"/>
</dbReference>
<dbReference type="EMBL" id="AY090932">
    <property type="protein sequence ID" value="AAM13984.1"/>
    <property type="molecule type" value="mRNA"/>
</dbReference>
<dbReference type="EMBL" id="AY122920">
    <property type="protein sequence ID" value="AAM67453.1"/>
    <property type="molecule type" value="mRNA"/>
</dbReference>
<dbReference type="EMBL" id="AY136452">
    <property type="protein sequence ID" value="AAM97117.1"/>
    <property type="molecule type" value="mRNA"/>
</dbReference>
<dbReference type="EMBL" id="BT008506">
    <property type="protein sequence ID" value="AAP37865.1"/>
    <property type="molecule type" value="mRNA"/>
</dbReference>
<dbReference type="EMBL" id="AK175597">
    <property type="protein sequence ID" value="BAD43360.1"/>
    <property type="molecule type" value="mRNA"/>
</dbReference>
<dbReference type="EMBL" id="AK176482">
    <property type="protein sequence ID" value="BAD44245.1"/>
    <property type="molecule type" value="mRNA"/>
</dbReference>
<dbReference type="RefSeq" id="NP_001327213.1">
    <property type="nucleotide sequence ID" value="NM_001338371.1"/>
</dbReference>
<dbReference type="RefSeq" id="NP_188523.1">
    <property type="nucleotide sequence ID" value="NM_112779.5"/>
</dbReference>
<dbReference type="RefSeq" id="NP_974336.1">
    <property type="nucleotide sequence ID" value="NM_202607.2"/>
</dbReference>
<dbReference type="SMR" id="Q67YI6"/>
<dbReference type="BioGRID" id="6758">
    <property type="interactions" value="4"/>
</dbReference>
<dbReference type="FunCoup" id="Q67YI6">
    <property type="interactions" value="481"/>
</dbReference>
<dbReference type="IntAct" id="Q67YI6">
    <property type="interactions" value="4"/>
</dbReference>
<dbReference type="iPTMnet" id="Q67YI6"/>
<dbReference type="PaxDb" id="3702-AT3G18930.2"/>
<dbReference type="ProteomicsDB" id="246571"/>
<dbReference type="EnsemblPlants" id="AT3G18930.1">
    <property type="protein sequence ID" value="AT3G18930.1"/>
    <property type="gene ID" value="AT3G18930"/>
</dbReference>
<dbReference type="EnsemblPlants" id="AT3G18930.2">
    <property type="protein sequence ID" value="AT3G18930.2"/>
    <property type="gene ID" value="AT3G18930"/>
</dbReference>
<dbReference type="EnsemblPlants" id="AT3G18930.3">
    <property type="protein sequence ID" value="AT3G18930.3"/>
    <property type="gene ID" value="AT3G18930"/>
</dbReference>
<dbReference type="GeneID" id="821425"/>
<dbReference type="Gramene" id="AT3G18930.1">
    <property type="protein sequence ID" value="AT3G18930.1"/>
    <property type="gene ID" value="AT3G18930"/>
</dbReference>
<dbReference type="Gramene" id="AT3G18930.2">
    <property type="protein sequence ID" value="AT3G18930.2"/>
    <property type="gene ID" value="AT3G18930"/>
</dbReference>
<dbReference type="Gramene" id="AT3G18930.3">
    <property type="protein sequence ID" value="AT3G18930.3"/>
    <property type="gene ID" value="AT3G18930"/>
</dbReference>
<dbReference type="KEGG" id="ath:AT3G18930"/>
<dbReference type="Araport" id="AT3G18930"/>
<dbReference type="TAIR" id="AT3G18930">
    <property type="gene designation" value="ATL65"/>
</dbReference>
<dbReference type="eggNOG" id="KOG0800">
    <property type="taxonomic scope" value="Eukaryota"/>
</dbReference>
<dbReference type="HOGENOM" id="CLU_753050_0_0_1"/>
<dbReference type="InParanoid" id="Q67YI6"/>
<dbReference type="OMA" id="TTSPWRY"/>
<dbReference type="PhylomeDB" id="Q67YI6"/>
<dbReference type="UniPathway" id="UPA00143"/>
<dbReference type="PRO" id="PR:Q67YI6"/>
<dbReference type="Proteomes" id="UP000006548">
    <property type="component" value="Chromosome 3"/>
</dbReference>
<dbReference type="ExpressionAtlas" id="Q67YI6">
    <property type="expression patterns" value="baseline and differential"/>
</dbReference>
<dbReference type="GO" id="GO:0009507">
    <property type="term" value="C:chloroplast"/>
    <property type="evidence" value="ECO:0000314"/>
    <property type="project" value="TAIR"/>
</dbReference>
<dbReference type="GO" id="GO:0016020">
    <property type="term" value="C:membrane"/>
    <property type="evidence" value="ECO:0007669"/>
    <property type="project" value="UniProtKB-SubCell"/>
</dbReference>
<dbReference type="GO" id="GO:0031982">
    <property type="term" value="C:vesicle"/>
    <property type="evidence" value="ECO:0000314"/>
    <property type="project" value="TAIR"/>
</dbReference>
<dbReference type="GO" id="GO:0016740">
    <property type="term" value="F:transferase activity"/>
    <property type="evidence" value="ECO:0007669"/>
    <property type="project" value="UniProtKB-KW"/>
</dbReference>
<dbReference type="GO" id="GO:0008270">
    <property type="term" value="F:zinc ion binding"/>
    <property type="evidence" value="ECO:0007669"/>
    <property type="project" value="UniProtKB-KW"/>
</dbReference>
<dbReference type="GO" id="GO:0016567">
    <property type="term" value="P:protein ubiquitination"/>
    <property type="evidence" value="ECO:0007669"/>
    <property type="project" value="UniProtKB-UniPathway"/>
</dbReference>
<dbReference type="CDD" id="cd16461">
    <property type="entry name" value="RING-H2_EL5-like"/>
    <property type="match status" value="1"/>
</dbReference>
<dbReference type="FunFam" id="3.30.40.10:FF:000591">
    <property type="entry name" value="RING-H2 finger protein ATL65"/>
    <property type="match status" value="1"/>
</dbReference>
<dbReference type="Gene3D" id="3.30.40.10">
    <property type="entry name" value="Zinc/RING finger domain, C3HC4 (zinc finger)"/>
    <property type="match status" value="1"/>
</dbReference>
<dbReference type="InterPro" id="IPR044600">
    <property type="entry name" value="ATL1/ATL16-like"/>
</dbReference>
<dbReference type="InterPro" id="IPR001841">
    <property type="entry name" value="Znf_RING"/>
</dbReference>
<dbReference type="InterPro" id="IPR013083">
    <property type="entry name" value="Znf_RING/FYVE/PHD"/>
</dbReference>
<dbReference type="PANTHER" id="PTHR46913">
    <property type="entry name" value="RING-H2 FINGER PROTEIN ATL16"/>
    <property type="match status" value="1"/>
</dbReference>
<dbReference type="PANTHER" id="PTHR46913:SF21">
    <property type="entry name" value="RING-TYPE E3 UBIQUITIN TRANSFERASE"/>
    <property type="match status" value="1"/>
</dbReference>
<dbReference type="Pfam" id="PF13639">
    <property type="entry name" value="zf-RING_2"/>
    <property type="match status" value="1"/>
</dbReference>
<dbReference type="SMART" id="SM00184">
    <property type="entry name" value="RING"/>
    <property type="match status" value="1"/>
</dbReference>
<dbReference type="SUPFAM" id="SSF57850">
    <property type="entry name" value="RING/U-box"/>
    <property type="match status" value="1"/>
</dbReference>
<dbReference type="PROSITE" id="PS50089">
    <property type="entry name" value="ZF_RING_2"/>
    <property type="match status" value="1"/>
</dbReference>
<feature type="chain" id="PRO_0000055792" description="RING-H2 finger protein ATL65">
    <location>
        <begin position="1"/>
        <end position="411"/>
    </location>
</feature>
<feature type="transmembrane region" description="Helical" evidence="2">
    <location>
        <begin position="36"/>
        <end position="56"/>
    </location>
</feature>
<feature type="zinc finger region" description="RING-type; atypical" evidence="3">
    <location>
        <begin position="156"/>
        <end position="198"/>
    </location>
</feature>
<feature type="region of interest" description="Disordered" evidence="4">
    <location>
        <begin position="1"/>
        <end position="32"/>
    </location>
</feature>
<feature type="compositionally biased region" description="Low complexity" evidence="4">
    <location>
        <begin position="10"/>
        <end position="21"/>
    </location>
</feature>
<feature type="sequence conflict" description="In Ref. 4; BAD44245." evidence="5" ref="4">
    <original>K</original>
    <variation>R</variation>
    <location>
        <position position="325"/>
    </location>
</feature>
<protein>
    <recommendedName>
        <fullName>RING-H2 finger protein ATL65</fullName>
        <ecNumber evidence="5">2.3.2.27</ecNumber>
    </recommendedName>
    <alternativeName>
        <fullName evidence="5">RING-type E3 ubiquitin transferase ATL65</fullName>
    </alternativeName>
</protein>
<organism>
    <name type="scientific">Arabidopsis thaliana</name>
    <name type="common">Mouse-ear cress</name>
    <dbReference type="NCBI Taxonomy" id="3702"/>
    <lineage>
        <taxon>Eukaryota</taxon>
        <taxon>Viridiplantae</taxon>
        <taxon>Streptophyta</taxon>
        <taxon>Embryophyta</taxon>
        <taxon>Tracheophyta</taxon>
        <taxon>Spermatophyta</taxon>
        <taxon>Magnoliopsida</taxon>
        <taxon>eudicotyledons</taxon>
        <taxon>Gunneridae</taxon>
        <taxon>Pentapetalae</taxon>
        <taxon>rosids</taxon>
        <taxon>malvids</taxon>
        <taxon>Brassicales</taxon>
        <taxon>Brassicaceae</taxon>
        <taxon>Camelineae</taxon>
        <taxon>Arabidopsis</taxon>
    </lineage>
</organism>
<proteinExistence type="evidence at transcript level"/>
<evidence type="ECO:0000250" key="1"/>
<evidence type="ECO:0000255" key="2"/>
<evidence type="ECO:0000255" key="3">
    <source>
        <dbReference type="PROSITE-ProRule" id="PRU00175"/>
    </source>
</evidence>
<evidence type="ECO:0000256" key="4">
    <source>
        <dbReference type="SAM" id="MobiDB-lite"/>
    </source>
</evidence>
<evidence type="ECO:0000305" key="5"/>
<name>ATL65_ARATH</name>
<gene>
    <name type="primary">ATL65</name>
    <name type="ordered locus">At3g18930</name>
    <name type="ORF">K13E13.2</name>
</gene>
<accession>Q67YI6</accession>
<accession>Q9LJ73</accession>
<reference key="1">
    <citation type="journal article" date="2000" name="DNA Res.">
        <title>Structural analysis of Arabidopsis thaliana chromosome 3. II. Sequence features of the 4,251,695 bp regions covered by 90 P1, TAC and BAC clones.</title>
        <authorList>
            <person name="Kaneko T."/>
            <person name="Katoh T."/>
            <person name="Sato S."/>
            <person name="Nakamura Y."/>
            <person name="Asamizu E."/>
            <person name="Tabata S."/>
        </authorList>
    </citation>
    <scope>NUCLEOTIDE SEQUENCE [LARGE SCALE GENOMIC DNA]</scope>
    <source>
        <strain>cv. Columbia</strain>
    </source>
</reference>
<reference key="2">
    <citation type="journal article" date="2017" name="Plant J.">
        <title>Araport11: a complete reannotation of the Arabidopsis thaliana reference genome.</title>
        <authorList>
            <person name="Cheng C.Y."/>
            <person name="Krishnakumar V."/>
            <person name="Chan A.P."/>
            <person name="Thibaud-Nissen F."/>
            <person name="Schobel S."/>
            <person name="Town C.D."/>
        </authorList>
    </citation>
    <scope>GENOME REANNOTATION</scope>
    <source>
        <strain>cv. Columbia</strain>
    </source>
</reference>
<reference key="3">
    <citation type="journal article" date="2003" name="Science">
        <title>Empirical analysis of transcriptional activity in the Arabidopsis genome.</title>
        <authorList>
            <person name="Yamada K."/>
            <person name="Lim J."/>
            <person name="Dale J.M."/>
            <person name="Chen H."/>
            <person name="Shinn P."/>
            <person name="Palm C.J."/>
            <person name="Southwick A.M."/>
            <person name="Wu H.C."/>
            <person name="Kim C.J."/>
            <person name="Nguyen M."/>
            <person name="Pham P.K."/>
            <person name="Cheuk R.F."/>
            <person name="Karlin-Newmann G."/>
            <person name="Liu S.X."/>
            <person name="Lam B."/>
            <person name="Sakano H."/>
            <person name="Wu T."/>
            <person name="Yu G."/>
            <person name="Miranda M."/>
            <person name="Quach H.L."/>
            <person name="Tripp M."/>
            <person name="Chang C.H."/>
            <person name="Lee J.M."/>
            <person name="Toriumi M.J."/>
            <person name="Chan M.M."/>
            <person name="Tang C.C."/>
            <person name="Onodera C.S."/>
            <person name="Deng J.M."/>
            <person name="Akiyama K."/>
            <person name="Ansari Y."/>
            <person name="Arakawa T."/>
            <person name="Banh J."/>
            <person name="Banno F."/>
            <person name="Bowser L."/>
            <person name="Brooks S.Y."/>
            <person name="Carninci P."/>
            <person name="Chao Q."/>
            <person name="Choy N."/>
            <person name="Enju A."/>
            <person name="Goldsmith A.D."/>
            <person name="Gurjal M."/>
            <person name="Hansen N.F."/>
            <person name="Hayashizaki Y."/>
            <person name="Johnson-Hopson C."/>
            <person name="Hsuan V.W."/>
            <person name="Iida K."/>
            <person name="Karnes M."/>
            <person name="Khan S."/>
            <person name="Koesema E."/>
            <person name="Ishida J."/>
            <person name="Jiang P.X."/>
            <person name="Jones T."/>
            <person name="Kawai J."/>
            <person name="Kamiya A."/>
            <person name="Meyers C."/>
            <person name="Nakajima M."/>
            <person name="Narusaka M."/>
            <person name="Seki M."/>
            <person name="Sakurai T."/>
            <person name="Satou M."/>
            <person name="Tamse R."/>
            <person name="Vaysberg M."/>
            <person name="Wallender E.K."/>
            <person name="Wong C."/>
            <person name="Yamamura Y."/>
            <person name="Yuan S."/>
            <person name="Shinozaki K."/>
            <person name="Davis R.W."/>
            <person name="Theologis A."/>
            <person name="Ecker J.R."/>
        </authorList>
    </citation>
    <scope>NUCLEOTIDE SEQUENCE [LARGE SCALE MRNA]</scope>
    <source>
        <strain>cv. Columbia</strain>
    </source>
</reference>
<reference key="4">
    <citation type="submission" date="2004-09" db="EMBL/GenBank/DDBJ databases">
        <title>Large-scale analysis of RIKEN Arabidopsis full-length (RAFL) cDNAs.</title>
        <authorList>
            <person name="Totoki Y."/>
            <person name="Seki M."/>
            <person name="Ishida J."/>
            <person name="Nakajima M."/>
            <person name="Enju A."/>
            <person name="Kamiya A."/>
            <person name="Narusaka M."/>
            <person name="Shin-i T."/>
            <person name="Nakagawa M."/>
            <person name="Sakamoto N."/>
            <person name="Oishi K."/>
            <person name="Kohara Y."/>
            <person name="Kobayashi M."/>
            <person name="Toyoda A."/>
            <person name="Sakaki Y."/>
            <person name="Sakurai T."/>
            <person name="Iida K."/>
            <person name="Akiyama K."/>
            <person name="Satou M."/>
            <person name="Toyoda T."/>
            <person name="Konagaya A."/>
            <person name="Carninci P."/>
            <person name="Kawai J."/>
            <person name="Hayashizaki Y."/>
            <person name="Shinozaki K."/>
        </authorList>
    </citation>
    <scope>NUCLEOTIDE SEQUENCE [LARGE SCALE MRNA]</scope>
    <source>
        <strain>cv. Columbia</strain>
    </source>
</reference>
<reference key="5">
    <citation type="journal article" date="2002" name="Genome Biol.">
        <title>Evaluation and classification of RING-finger domains encoded by the Arabidopsis genome.</title>
        <authorList>
            <person name="Kosarev P."/>
            <person name="Mayer K.F.X."/>
            <person name="Hardtke C.S."/>
        </authorList>
    </citation>
    <scope>GENE FAMILY ORGANIZATION</scope>
</reference>
<reference key="6">
    <citation type="journal article" date="2006" name="J. Mol. Evol.">
        <title>The ATL gene family from Arabidopsis thaliana and Oryza sativa comprises a large number of putative ubiquitin ligases of the RING-H2 type.</title>
        <authorList>
            <person name="Serrano M."/>
            <person name="Parra S."/>
            <person name="Alcaraz L.D."/>
            <person name="Guzman P."/>
        </authorList>
    </citation>
    <scope>NOMENCLATURE</scope>
    <scope>GENE FAMILY ORGANIZATION</scope>
</reference>
<sequence length="411" mass="46664">MRFVAPPPRSGDNSPSPSPSSGISEEILSRSSDPPLEFSPPLIAMVVVLAAAFLFVTYSRLISRRFLSPLFRRFRRWRCRRRRLLHLSSASSASTSSSDLRSFSPFPFDSFHYSSYSPYGLDDSVIKTLPLFLYSAAACTGKPAVGKTSAANCRDCAVCLLEFEEGDYVRTLPLCFHAFHLECIDEWLRSHPNCPLCRTAILGSAGVLTPMSPFVPLMAPRIRPSLDDEENNAIIIRGEITPSRSNWNTIAADTTNDQEIRASVEEQSSPAISRFRELKRSYSFECERESESERVTMEPATVSPWRYRRSTWNKRQSPFGNLISKSRVFSFRYYRSTKSPFFRRRSSAGVFYPISERIPATGSSSRRTKSMTSPMFFRTAPHSSSRLRCGDPEALLSPERWRRRDTCRAEM</sequence>
<keyword id="KW-0472">Membrane</keyword>
<keyword id="KW-0479">Metal-binding</keyword>
<keyword id="KW-1185">Reference proteome</keyword>
<keyword id="KW-0808">Transferase</keyword>
<keyword id="KW-0812">Transmembrane</keyword>
<keyword id="KW-1133">Transmembrane helix</keyword>
<keyword id="KW-0833">Ubl conjugation pathway</keyword>
<keyword id="KW-0862">Zinc</keyword>
<keyword id="KW-0863">Zinc-finger</keyword>